<evidence type="ECO:0000250" key="1"/>
<evidence type="ECO:0000250" key="2">
    <source>
        <dbReference type="UniProtKB" id="Q1H5H1"/>
    </source>
</evidence>
<evidence type="ECO:0000255" key="3"/>
<evidence type="ECO:0000269" key="4">
    <source>
    </source>
</evidence>
<evidence type="ECO:0000305" key="5"/>
<evidence type="ECO:0000312" key="6">
    <source>
        <dbReference type="EMBL" id="AAH54578.2"/>
    </source>
</evidence>
<evidence type="ECO:0000312" key="7">
    <source>
        <dbReference type="EMBL" id="AAO65273.1"/>
    </source>
</evidence>
<evidence type="ECO:0000312" key="8">
    <source>
        <dbReference type="EMBL" id="ABG54379.1"/>
    </source>
</evidence>
<evidence type="ECO:0000312" key="9">
    <source>
        <dbReference type="ZFIN" id="ZDB-GENE-030327-6"/>
    </source>
</evidence>
<reference evidence="5 7" key="1">
    <citation type="journal article" date="2003" name="Gene Expr. Patterns">
        <title>Spatial and temporal expression patterns of selenoprotein genes during embryogenesis in zebrafish.</title>
        <authorList>
            <person name="Thisse C."/>
            <person name="Degrave A."/>
            <person name="Kryukov G.V."/>
            <person name="Gladyshev V.N."/>
            <person name="Obrecht-Pflumio S."/>
            <person name="Krol A."/>
            <person name="Thisse B."/>
            <person name="Lescure A."/>
        </authorList>
    </citation>
    <scope>NUCLEOTIDE SEQUENCE [MRNA]</scope>
    <scope>TISSUE SPECIFICITY</scope>
    <source>
        <tissue evidence="4">Embryo</tissue>
    </source>
</reference>
<reference evidence="5 6" key="2">
    <citation type="submission" date="2003-07" db="EMBL/GenBank/DDBJ databases">
        <authorList>
            <consortium name="NIH - Zebrafish Gene Collection (ZGC) project"/>
        </authorList>
    </citation>
    <scope>NUCLEOTIDE SEQUENCE [LARGE SCALE MRNA]</scope>
    <source>
        <tissue evidence="6">Kidney</tissue>
    </source>
</reference>
<reference evidence="5 6" key="3">
    <citation type="submission" date="2006-05" db="EMBL/GenBank/DDBJ databases">
        <authorList>
            <person name="Frabetti F."/>
            <person name="Casadei R."/>
            <person name="Vitale L."/>
            <person name="Lenzi L."/>
            <person name="Canaider S."/>
            <person name="Facchin F."/>
            <person name="Carinci P."/>
            <person name="Zannotti M."/>
            <person name="Strippoli P."/>
        </authorList>
    </citation>
    <scope>NUCLEOTIDE SEQUENCE [MRNA] OF 1-174</scope>
    <source>
        <tissue evidence="5 8">Gastrula</tissue>
    </source>
</reference>
<proteinExistence type="evidence at transcript level"/>
<sequence length="193" mass="22261">MRWLPFSALLLWALCLHSASADNNGVKKMKMQFATGPLLKFQICVSUGYKRVFEEYTQALYQRYPDIRIEGENYLPLPLYRHIASFLSMFKLLLIGVIILGKDPFALCGMQAPGIWVWSQENKIYACMMVFFFSNMIENQCMSTGAFEITLNDVPVWSKLESGHLPSMQQLVQILENEMKMSMHMDTLPPHQS</sequence>
<dbReference type="EC" id="1.8.1.9" evidence="2"/>
<dbReference type="EMBL" id="AY221264">
    <property type="protein sequence ID" value="AAO65273.1"/>
    <property type="status" value="ALT_INIT"/>
    <property type="molecule type" value="mRNA"/>
</dbReference>
<dbReference type="EMBL" id="BC054578">
    <property type="protein sequence ID" value="AAH54578.2"/>
    <property type="status" value="ALT_INIT"/>
    <property type="molecule type" value="mRNA"/>
</dbReference>
<dbReference type="EMBL" id="DQ660904">
    <property type="protein sequence ID" value="ABG54379.1"/>
    <property type="status" value="ALT_INIT"/>
    <property type="molecule type" value="mRNA"/>
</dbReference>
<dbReference type="RefSeq" id="NP_840075.2">
    <property type="nucleotide sequence ID" value="NM_178290.6"/>
</dbReference>
<dbReference type="FunCoup" id="Q802F2">
    <property type="interactions" value="849"/>
</dbReference>
<dbReference type="STRING" id="7955.ENSDARP00000136996"/>
<dbReference type="PaxDb" id="7955-ENSDARP00000075657"/>
<dbReference type="Ensembl" id="ENSDART00000165712">
    <property type="protein sequence ID" value="ENSDARP00000136996"/>
    <property type="gene ID" value="ENSDARG00000058354"/>
</dbReference>
<dbReference type="GeneID" id="352919"/>
<dbReference type="KEGG" id="dre:352919"/>
<dbReference type="AGR" id="ZFIN:ZDB-GENE-030327-6"/>
<dbReference type="CTD" id="352919"/>
<dbReference type="ZFIN" id="ZDB-GENE-030327-6">
    <property type="gene designation" value="selenot1a"/>
</dbReference>
<dbReference type="eggNOG" id="KOG3286">
    <property type="taxonomic scope" value="Eukaryota"/>
</dbReference>
<dbReference type="InParanoid" id="Q802F2"/>
<dbReference type="OMA" id="LKFQICC"/>
<dbReference type="OrthoDB" id="60822at2759"/>
<dbReference type="PhylomeDB" id="Q802F2"/>
<dbReference type="PRO" id="PR:Q802F2"/>
<dbReference type="Proteomes" id="UP000000437">
    <property type="component" value="Chromosome 2"/>
</dbReference>
<dbReference type="Bgee" id="ENSDARG00000058354">
    <property type="expression patterns" value="Expressed in intestine and 47 other cell types or tissues"/>
</dbReference>
<dbReference type="GO" id="GO:0005789">
    <property type="term" value="C:endoplasmic reticulum membrane"/>
    <property type="evidence" value="ECO:0000318"/>
    <property type="project" value="GO_Central"/>
</dbReference>
<dbReference type="GO" id="GO:0004791">
    <property type="term" value="F:thioredoxin-disulfide reductase (NADPH) activity"/>
    <property type="evidence" value="ECO:0000318"/>
    <property type="project" value="GO_Central"/>
</dbReference>
<dbReference type="GO" id="GO:0045454">
    <property type="term" value="P:cell redox homeostasis"/>
    <property type="evidence" value="ECO:0000318"/>
    <property type="project" value="GO_Central"/>
</dbReference>
<dbReference type="FunFam" id="3.40.30.10:FF:000085">
    <property type="entry name" value="Selenoprotein T"/>
    <property type="match status" value="1"/>
</dbReference>
<dbReference type="Gene3D" id="3.40.30.10">
    <property type="entry name" value="Glutaredoxin"/>
    <property type="match status" value="1"/>
</dbReference>
<dbReference type="InterPro" id="IPR011893">
    <property type="entry name" value="Selenoprotein_Rdx-typ"/>
</dbReference>
<dbReference type="InterPro" id="IPR019389">
    <property type="entry name" value="Selenoprotein_T"/>
</dbReference>
<dbReference type="InterPro" id="IPR036249">
    <property type="entry name" value="Thioredoxin-like_sf"/>
</dbReference>
<dbReference type="NCBIfam" id="TIGR02174">
    <property type="entry name" value="CXXU_selWTH"/>
    <property type="match status" value="1"/>
</dbReference>
<dbReference type="PANTHER" id="PTHR13544">
    <property type="entry name" value="SELENOPROTEIN T"/>
    <property type="match status" value="1"/>
</dbReference>
<dbReference type="PANTHER" id="PTHR13544:SF7">
    <property type="entry name" value="THIOREDOXIN REDUCTASE-LIKE SELENOPROTEIN T1A-RELATED"/>
    <property type="match status" value="1"/>
</dbReference>
<dbReference type="Pfam" id="PF10262">
    <property type="entry name" value="Rdx"/>
    <property type="match status" value="1"/>
</dbReference>
<dbReference type="SUPFAM" id="SSF52833">
    <property type="entry name" value="Thioredoxin-like"/>
    <property type="match status" value="1"/>
</dbReference>
<protein>
    <recommendedName>
        <fullName evidence="5">Thioredoxin reductase-like selenoprotein T1a</fullName>
        <ecNumber evidence="2">1.8.1.9</ecNumber>
    </recommendedName>
</protein>
<name>SELTA_DANRE</name>
<keyword id="KW-0256">Endoplasmic reticulum</keyword>
<keyword id="KW-0472">Membrane</keyword>
<keyword id="KW-0521">NADP</keyword>
<keyword id="KW-0560">Oxidoreductase</keyword>
<keyword id="KW-0676">Redox-active center</keyword>
<keyword id="KW-1185">Reference proteome</keyword>
<keyword id="KW-0712">Selenocysteine</keyword>
<keyword id="KW-0732">Signal</keyword>
<keyword id="KW-0812">Transmembrane</keyword>
<keyword id="KW-1133">Transmembrane helix</keyword>
<feature type="signal peptide" evidence="3">
    <location>
        <begin position="1"/>
        <end position="21"/>
    </location>
</feature>
<feature type="chain" id="PRO_0000252041" description="Thioredoxin reductase-like selenoprotein T1a" evidence="3">
    <location>
        <begin position="22"/>
        <end position="193"/>
    </location>
</feature>
<feature type="transmembrane region" description="Helical" evidence="3">
    <location>
        <begin position="83"/>
        <end position="101"/>
    </location>
</feature>
<feature type="non-standard amino acid" description="Selenocysteine" evidence="7">
    <location>
        <position position="47"/>
    </location>
</feature>
<feature type="cross-link" description="Cysteinyl-selenocysteine (Cys-Sec)" evidence="3">
    <location>
        <begin position="44"/>
        <end position="47"/>
    </location>
</feature>
<organism>
    <name type="scientific">Danio rerio</name>
    <name type="common">Zebrafish</name>
    <name type="synonym">Brachydanio rerio</name>
    <dbReference type="NCBI Taxonomy" id="7955"/>
    <lineage>
        <taxon>Eukaryota</taxon>
        <taxon>Metazoa</taxon>
        <taxon>Chordata</taxon>
        <taxon>Craniata</taxon>
        <taxon>Vertebrata</taxon>
        <taxon>Euteleostomi</taxon>
        <taxon>Actinopterygii</taxon>
        <taxon>Neopterygii</taxon>
        <taxon>Teleostei</taxon>
        <taxon>Ostariophysi</taxon>
        <taxon>Cypriniformes</taxon>
        <taxon>Danionidae</taxon>
        <taxon>Danioninae</taxon>
        <taxon>Danio</taxon>
    </lineage>
</organism>
<accession>Q802F2</accession>
<accession>Q0Z8S3</accession>
<comment type="function">
    <text evidence="2">Selenoprotein with thioredoxin reductase-like oxidoreductase activity.</text>
</comment>
<comment type="catalytic activity">
    <reaction evidence="2">
        <text>[thioredoxin]-dithiol + NADP(+) = [thioredoxin]-disulfide + NADPH + H(+)</text>
        <dbReference type="Rhea" id="RHEA:20345"/>
        <dbReference type="Rhea" id="RHEA-COMP:10698"/>
        <dbReference type="Rhea" id="RHEA-COMP:10700"/>
        <dbReference type="ChEBI" id="CHEBI:15378"/>
        <dbReference type="ChEBI" id="CHEBI:29950"/>
        <dbReference type="ChEBI" id="CHEBI:50058"/>
        <dbReference type="ChEBI" id="CHEBI:57783"/>
        <dbReference type="ChEBI" id="CHEBI:58349"/>
        <dbReference type="EC" id="1.8.1.9"/>
    </reaction>
</comment>
<comment type="subcellular location">
    <subcellularLocation>
        <location evidence="2">Endoplasmic reticulum membrane</location>
        <topology evidence="3">Single-pass membrane protein</topology>
    </subcellularLocation>
</comment>
<comment type="tissue specificity">
    <text evidence="4">Expressed in embryonic olfactory vesicles and the photoreceptor cell layer of the embryonic retina. Low level in embryonic epiphysis.</text>
</comment>
<comment type="PTM">
    <text evidence="1">May contain a selenide-sulfide bond between Cys-44 and Sec-47. This bond is speculated to serve as redox-active pair (By similarity).</text>
</comment>
<comment type="similarity">
    <text evidence="5">Belongs to the SelWTH family. Selenoprotein T subfamily.</text>
</comment>
<comment type="sequence caution" evidence="5">
    <conflict type="erroneous initiation">
        <sequence resource="EMBL-CDS" id="AAH54578"/>
    </conflict>
    <text>Truncated N-terminus.</text>
</comment>
<comment type="sequence caution" evidence="5">
    <conflict type="erroneous initiation">
        <sequence resource="EMBL-CDS" id="AAO65273"/>
    </conflict>
    <text>Truncated N-terminus.</text>
</comment>
<comment type="sequence caution" evidence="5">
    <conflict type="erroneous initiation">
        <sequence resource="EMBL-CDS" id="ABG54379"/>
    </conflict>
    <text>Extended N-terminus.</text>
</comment>
<gene>
    <name evidence="5" type="primary">selenot1a</name>
    <name evidence="9" type="synonym">selt1a</name>
    <name evidence="9" type="synonym">sept1a</name>
</gene>